<proteinExistence type="evidence at protein level"/>
<keyword id="KW-0002">3D-structure</keyword>
<keyword id="KW-0903">Direct protein sequencing</keyword>
<keyword id="KW-1015">Disulfide bond</keyword>
<keyword id="KW-0255">Endonuclease</keyword>
<keyword id="KW-0325">Glycoprotein</keyword>
<keyword id="KW-0378">Hydrolase</keyword>
<keyword id="KW-0479">Metal-binding</keyword>
<keyword id="KW-0540">Nuclease</keyword>
<keyword id="KW-1185">Reference proteome</keyword>
<keyword id="KW-0732">Signal</keyword>
<keyword id="KW-0862">Zinc</keyword>
<dbReference type="EC" id="3.1.30.1" evidence="4"/>
<dbReference type="EMBL" id="D45902">
    <property type="protein sequence ID" value="BAA08310.1"/>
    <property type="molecule type" value="Genomic_DNA"/>
</dbReference>
<dbReference type="EMBL" id="BA000050">
    <property type="protein sequence ID" value="BAE56634.1"/>
    <property type="molecule type" value="Genomic_DNA"/>
</dbReference>
<dbReference type="PIR" id="JX0180">
    <property type="entry name" value="JX0180"/>
</dbReference>
<dbReference type="RefSeq" id="XP_001818636.1">
    <property type="nucleotide sequence ID" value="XM_001818584.2"/>
</dbReference>
<dbReference type="PDB" id="5FB9">
    <property type="method" value="X-ray"/>
    <property type="resolution" value="1.50 A"/>
    <property type="chains" value="A/B=21-287"/>
</dbReference>
<dbReference type="PDB" id="5FBA">
    <property type="method" value="X-ray"/>
    <property type="resolution" value="1.80 A"/>
    <property type="chains" value="A=21-287"/>
</dbReference>
<dbReference type="PDB" id="5FBB">
    <property type="method" value="X-ray"/>
    <property type="resolution" value="1.75 A"/>
    <property type="chains" value="A/B=21-287"/>
</dbReference>
<dbReference type="PDB" id="5FBC">
    <property type="method" value="X-ray"/>
    <property type="resolution" value="1.75 A"/>
    <property type="chains" value="A=21-287"/>
</dbReference>
<dbReference type="PDB" id="5FBD">
    <property type="method" value="X-ray"/>
    <property type="resolution" value="1.75 A"/>
    <property type="chains" value="A=21-287"/>
</dbReference>
<dbReference type="PDB" id="5FBF">
    <property type="method" value="X-ray"/>
    <property type="resolution" value="1.04 A"/>
    <property type="chains" value="A=21-287"/>
</dbReference>
<dbReference type="PDB" id="5FBG">
    <property type="method" value="X-ray"/>
    <property type="resolution" value="1.97 A"/>
    <property type="chains" value="A/B=21-287"/>
</dbReference>
<dbReference type="PDB" id="7QTA">
    <property type="method" value="X-ray"/>
    <property type="resolution" value="1.06 A"/>
    <property type="chains" value="A/B=21-287"/>
</dbReference>
<dbReference type="PDB" id="7QTB">
    <property type="method" value="X-ray"/>
    <property type="resolution" value="1.04 A"/>
    <property type="chains" value="A/B=21-287"/>
</dbReference>
<dbReference type="PDBsum" id="5FB9"/>
<dbReference type="PDBsum" id="5FBA"/>
<dbReference type="PDBsum" id="5FBB"/>
<dbReference type="PDBsum" id="5FBC"/>
<dbReference type="PDBsum" id="5FBD"/>
<dbReference type="PDBsum" id="5FBF"/>
<dbReference type="PDBsum" id="5FBG"/>
<dbReference type="PDBsum" id="7QTA"/>
<dbReference type="PDBsum" id="7QTB"/>
<dbReference type="SMR" id="P24021"/>
<dbReference type="STRING" id="510516.P24021"/>
<dbReference type="GlyCosmos" id="P24021">
    <property type="glycosylation" value="3 sites, No reported glycans"/>
</dbReference>
<dbReference type="iPTMnet" id="P24021"/>
<dbReference type="EnsemblFungi" id="BAE56634">
    <property type="protein sequence ID" value="BAE56634"/>
    <property type="gene ID" value="AO090001000075"/>
</dbReference>
<dbReference type="GeneID" id="5990607"/>
<dbReference type="KEGG" id="aor:AO090001000075"/>
<dbReference type="VEuPathDB" id="FungiDB:AO090001000075"/>
<dbReference type="HOGENOM" id="CLU_044365_0_0_1"/>
<dbReference type="OMA" id="WDTSIPN"/>
<dbReference type="OrthoDB" id="101178at5052"/>
<dbReference type="PRO" id="PR:P24021"/>
<dbReference type="Proteomes" id="UP000006564">
    <property type="component" value="Chromosome 2"/>
</dbReference>
<dbReference type="GO" id="GO:0004519">
    <property type="term" value="F:endonuclease activity"/>
    <property type="evidence" value="ECO:0000314"/>
    <property type="project" value="UniProtKB"/>
</dbReference>
<dbReference type="GO" id="GO:0046872">
    <property type="term" value="F:metal ion binding"/>
    <property type="evidence" value="ECO:0007669"/>
    <property type="project" value="UniProtKB-KW"/>
</dbReference>
<dbReference type="GO" id="GO:0004518">
    <property type="term" value="F:nuclease activity"/>
    <property type="evidence" value="ECO:0000314"/>
    <property type="project" value="AspGD"/>
</dbReference>
<dbReference type="GO" id="GO:0003676">
    <property type="term" value="F:nucleic acid binding"/>
    <property type="evidence" value="ECO:0007669"/>
    <property type="project" value="InterPro"/>
</dbReference>
<dbReference type="GO" id="GO:0006308">
    <property type="term" value="P:DNA catabolic process"/>
    <property type="evidence" value="ECO:0000314"/>
    <property type="project" value="AspGD"/>
</dbReference>
<dbReference type="CDD" id="cd11010">
    <property type="entry name" value="S1-P1_nuclease"/>
    <property type="match status" value="1"/>
</dbReference>
<dbReference type="FunFam" id="1.10.575.10:FF:000004">
    <property type="entry name" value="Nuclease S1"/>
    <property type="match status" value="1"/>
</dbReference>
<dbReference type="Gene3D" id="1.10.575.10">
    <property type="entry name" value="P1 Nuclease"/>
    <property type="match status" value="1"/>
</dbReference>
<dbReference type="InterPro" id="IPR023827">
    <property type="entry name" value="Peptidase_S8_Asp-AS"/>
</dbReference>
<dbReference type="InterPro" id="IPR008947">
    <property type="entry name" value="PLipase_C/P1_nuclease_dom_sf"/>
</dbReference>
<dbReference type="InterPro" id="IPR003154">
    <property type="entry name" value="S1/P1nuclease"/>
</dbReference>
<dbReference type="PANTHER" id="PTHR33146">
    <property type="entry name" value="ENDONUCLEASE 4"/>
    <property type="match status" value="1"/>
</dbReference>
<dbReference type="PANTHER" id="PTHR33146:SF26">
    <property type="entry name" value="ENDONUCLEASE 4"/>
    <property type="match status" value="1"/>
</dbReference>
<dbReference type="Pfam" id="PF02265">
    <property type="entry name" value="S1-P1_nuclease"/>
    <property type="match status" value="1"/>
</dbReference>
<dbReference type="SUPFAM" id="SSF48537">
    <property type="entry name" value="Phospholipase C/P1 nuclease"/>
    <property type="match status" value="1"/>
</dbReference>
<gene>
    <name evidence="5" type="primary">nucS</name>
    <name evidence="7" type="ORF">AO090001000075</name>
</gene>
<comment type="function">
    <text evidence="4">Hydrolyzes only single-stranded DNA and RNA without apparent specificity for bases.</text>
</comment>
<comment type="catalytic activity">
    <reaction evidence="4">
        <text>Endonucleolytic cleavage to 5'-phosphomononucleotide and 5'-phosphooligonucleotide end-products.</text>
        <dbReference type="EC" id="3.1.30.1"/>
    </reaction>
</comment>
<comment type="cofactor">
    <cofactor evidence="4">
        <name>Zn(2+)</name>
        <dbReference type="ChEBI" id="CHEBI:29105"/>
    </cofactor>
    <text evidence="4">Binds 3 divalent metal cations.</text>
</comment>
<comment type="activity regulation">
    <text evidence="4">Inhibited by inorganic phosphate (Pi).</text>
</comment>
<comment type="biophysicochemical properties">
    <kinetics>
        <KM evidence="4">0.14 mg/ml for ssDNA</KM>
        <KM evidence="4">0.16 mg/ml for RNA</KM>
    </kinetics>
</comment>
<comment type="subunit">
    <text>Monomer.</text>
</comment>
<comment type="similarity">
    <text evidence="6">Belongs to the nuclease type I family.</text>
</comment>
<reference key="1">
    <citation type="journal article" date="1995" name="Appl. Microbiol. Biotechnol.">
        <title>Cloning, characterization and overproduction of nuclease S1 gene (nucS) from Aspergillus oryzae.</title>
        <authorList>
            <person name="Lee B.R."/>
            <person name="Kitamoto K."/>
            <person name="Yamada O."/>
            <person name="Kumagai C."/>
        </authorList>
    </citation>
    <scope>NUCLEOTIDE SEQUENCE [GENOMIC DNA]</scope>
    <source>
        <strain>ATCC 42149 / RIB 40</strain>
    </source>
</reference>
<reference key="2">
    <citation type="journal article" date="2005" name="Nature">
        <title>Genome sequencing and analysis of Aspergillus oryzae.</title>
        <authorList>
            <person name="Machida M."/>
            <person name="Asai K."/>
            <person name="Sano M."/>
            <person name="Tanaka T."/>
            <person name="Kumagai T."/>
            <person name="Terai G."/>
            <person name="Kusumoto K."/>
            <person name="Arima T."/>
            <person name="Akita O."/>
            <person name="Kashiwagi Y."/>
            <person name="Abe K."/>
            <person name="Gomi K."/>
            <person name="Horiuchi H."/>
            <person name="Kitamoto K."/>
            <person name="Kobayashi T."/>
            <person name="Takeuchi M."/>
            <person name="Denning D.W."/>
            <person name="Galagan J.E."/>
            <person name="Nierman W.C."/>
            <person name="Yu J."/>
            <person name="Archer D.B."/>
            <person name="Bennett J.W."/>
            <person name="Bhatnagar D."/>
            <person name="Cleveland T.E."/>
            <person name="Fedorova N.D."/>
            <person name="Gotoh O."/>
            <person name="Horikawa H."/>
            <person name="Hosoyama A."/>
            <person name="Ichinomiya M."/>
            <person name="Igarashi R."/>
            <person name="Iwashita K."/>
            <person name="Juvvadi P.R."/>
            <person name="Kato M."/>
            <person name="Kato Y."/>
            <person name="Kin T."/>
            <person name="Kokubun A."/>
            <person name="Maeda H."/>
            <person name="Maeyama N."/>
            <person name="Maruyama J."/>
            <person name="Nagasaki H."/>
            <person name="Nakajima T."/>
            <person name="Oda K."/>
            <person name="Okada K."/>
            <person name="Paulsen I."/>
            <person name="Sakamoto K."/>
            <person name="Sawano T."/>
            <person name="Takahashi M."/>
            <person name="Takase K."/>
            <person name="Terabayashi Y."/>
            <person name="Wortman J.R."/>
            <person name="Yamada O."/>
            <person name="Yamagata Y."/>
            <person name="Anazawa H."/>
            <person name="Hata Y."/>
            <person name="Koide Y."/>
            <person name="Komori T."/>
            <person name="Koyama Y."/>
            <person name="Minetoki T."/>
            <person name="Suharnan S."/>
            <person name="Tanaka A."/>
            <person name="Isono K."/>
            <person name="Kuhara S."/>
            <person name="Ogasawara N."/>
            <person name="Kikuchi H."/>
        </authorList>
    </citation>
    <scope>NUCLEOTIDE SEQUENCE [LARGE SCALE GENOMIC DNA]</scope>
    <source>
        <strain>ATCC 42149 / RIB 40</strain>
    </source>
</reference>
<reference key="3">
    <citation type="journal article" date="1991" name="J. Biochem.">
        <title>Amino acid sequence of nuclease S1 from Aspergillus oryzae.</title>
        <authorList>
            <person name="Iwamatsu A."/>
            <person name="Aoyama H."/>
            <person name="Dibo G."/>
            <person name="Tsunasawa S."/>
            <person name="Sakiyama F."/>
        </authorList>
    </citation>
    <scope>PROTEIN SEQUENCE OF 21-287</scope>
</reference>
<reference key="4">
    <citation type="journal article" date="2016" name="PLoS ONE">
        <title>Structural and Catalytic Properties of S1 Nuclease from Aspergillus oryzae Responsible for Substrate Recognition, Cleavage, Non-Specificity, and Inhibition.</title>
        <authorList>
            <person name="Koval T."/>
            <person name="Ostergaard L.H."/>
            <person name="Lehmbeck J."/>
            <person name="Norgaard A."/>
            <person name="Lipovova P."/>
            <person name="Duskova J."/>
            <person name="Skalova T."/>
            <person name="Trundova M."/>
            <person name="Kolenko P."/>
            <person name="Fejfarova K."/>
            <person name="Stransky J."/>
            <person name="Svecova L."/>
            <person name="Hasek J."/>
            <person name="Dohnalek J."/>
        </authorList>
    </citation>
    <scope>X-RAY CRYSTALLOGRAPHY (1.04 ANGSTROMS) OF 21-287 IN COMPLEX WITH SUBSTRATE AND ZINC</scope>
    <scope>GLYCOSYLATION AT ASN-112 AND ASN-248</scope>
    <scope>DISULFIDE BONDS</scope>
    <scope>BIOPHYSICOCHEMICAL PROPERTIES</scope>
    <scope>CATALYTIC ACTIVITY</scope>
    <scope>FUNCTION</scope>
    <scope>MUTAGENESIS OF ASP-65; LYS-68 AND ASN-154</scope>
    <scope>ACTIVITY REGULATION</scope>
</reference>
<accession>P24021</accession>
<accession>Q00235</accession>
<name>NUS1_ASPOR</name>
<feature type="signal peptide" evidence="3">
    <location>
        <begin position="1"/>
        <end position="20"/>
    </location>
</feature>
<feature type="chain" id="PRO_0000058010" description="Nuclease S1">
    <location>
        <begin position="21"/>
        <end position="287"/>
    </location>
</feature>
<feature type="region of interest" description="Substrate binding" evidence="4 9 10 12 13 14">
    <location>
        <begin position="135"/>
        <end position="183"/>
    </location>
</feature>
<feature type="binding site" evidence="4 9 10 12 13 14">
    <location>
        <begin position="21"/>
        <end position="26"/>
    </location>
    <ligand>
        <name>substrate</name>
    </ligand>
</feature>
<feature type="binding site" evidence="4 8 9 10 11 12 13 14">
    <location>
        <position position="21"/>
    </location>
    <ligand>
        <name>a divalent metal cation</name>
        <dbReference type="ChEBI" id="CHEBI:60240"/>
        <label>3</label>
    </ligand>
</feature>
<feature type="binding site" evidence="4 8 9 10 11 12 13 14">
    <location>
        <position position="26"/>
    </location>
    <ligand>
        <name>a divalent metal cation</name>
        <dbReference type="ChEBI" id="CHEBI:60240"/>
        <label>3</label>
    </ligand>
</feature>
<feature type="binding site" evidence="4 9 10 12 13 14">
    <location>
        <begin position="65"/>
        <end position="71"/>
    </location>
    <ligand>
        <name>substrate</name>
    </ligand>
</feature>
<feature type="binding site" evidence="4 12 13">
    <location>
        <position position="65"/>
    </location>
    <ligand>
        <name>a divalent metal cation</name>
        <dbReference type="ChEBI" id="CHEBI:60240"/>
        <label>1</label>
    </ligand>
</feature>
<feature type="binding site" evidence="4 10 12 13 14">
    <location>
        <begin position="80"/>
        <end position="83"/>
    </location>
    <ligand>
        <name>substrate</name>
    </ligand>
</feature>
<feature type="binding site" evidence="4 8 9 10 11 12 13 14">
    <location>
        <position position="80"/>
    </location>
    <ligand>
        <name>a divalent metal cation</name>
        <dbReference type="ChEBI" id="CHEBI:60240"/>
        <label>1</label>
    </ligand>
</feature>
<feature type="binding site" evidence="1">
    <location>
        <begin position="93"/>
        <end position="98"/>
    </location>
    <ligand>
        <name>substrate</name>
    </ligand>
</feature>
<feature type="binding site" evidence="4 8 9 10 11 12 13 14">
    <location>
        <position position="135"/>
    </location>
    <ligand>
        <name>a divalent metal cation</name>
        <dbReference type="ChEBI" id="CHEBI:60240"/>
        <label>1</label>
    </ligand>
</feature>
<feature type="binding site" evidence="4 8 9 10 11 12 13 14">
    <location>
        <position position="139"/>
    </location>
    <ligand>
        <name>a divalent metal cation</name>
        <dbReference type="ChEBI" id="CHEBI:60240"/>
        <label>1</label>
    </ligand>
</feature>
<feature type="binding site" evidence="4 8 9 10 11 12 13 14">
    <location>
        <position position="139"/>
    </location>
    <ligand>
        <name>a divalent metal cation</name>
        <dbReference type="ChEBI" id="CHEBI:60240"/>
        <label>3</label>
    </ligand>
</feature>
<feature type="binding site" evidence="4 8 9 10 11 12 13 14">
    <location>
        <position position="145"/>
    </location>
    <ligand>
        <name>a divalent metal cation</name>
        <dbReference type="ChEBI" id="CHEBI:60240"/>
        <label>2</label>
    </ligand>
</feature>
<feature type="binding site" evidence="4 8 9 10 11 12 13 14">
    <location>
        <position position="168"/>
    </location>
    <ligand>
        <name>a divalent metal cation</name>
        <dbReference type="ChEBI" id="CHEBI:60240"/>
        <label>2</label>
    </ligand>
</feature>
<feature type="binding site" evidence="4 8 9 10 11 12 13 14">
    <location>
        <position position="172"/>
    </location>
    <ligand>
        <name>a divalent metal cation</name>
        <dbReference type="ChEBI" id="CHEBI:60240"/>
        <label>2</label>
    </ligand>
</feature>
<feature type="site" description="Important for catalytic activity" evidence="4">
    <location>
        <position position="65"/>
    </location>
</feature>
<feature type="site" description="Important for catalytic activity" evidence="1">
    <location>
        <position position="68"/>
    </location>
</feature>
<feature type="glycosylation site" description="N-linked (GlcNAc...) asparagine" evidence="2 4 8 10 11 12 13 14">
    <location>
        <position position="112"/>
    </location>
</feature>
<feature type="glycosylation site" description="N-linked (GlcNAc...) asparagine" evidence="2">
    <location>
        <position position="122"/>
    </location>
</feature>
<feature type="glycosylation site" description="N-linked (GlcNAc...) asparagine" evidence="2 4 8 9 10 11 13 14">
    <location>
        <position position="248"/>
    </location>
</feature>
<feature type="disulfide bond" evidence="4 8 9 10 11 12 13 14">
    <location>
        <begin position="92"/>
        <end position="236"/>
    </location>
</feature>
<feature type="disulfide bond" evidence="4 8 9 10 11 12 13 14">
    <location>
        <begin position="100"/>
        <end position="105"/>
    </location>
</feature>
<feature type="mutagenesis site" description="Impaired activity." evidence="4">
    <original>D</original>
    <variation>N</variation>
    <location>
        <position position="65"/>
    </location>
</feature>
<feature type="mutagenesis site" description="Reduced activity." evidence="4">
    <original>K</original>
    <variation>N</variation>
    <location>
        <position position="68"/>
    </location>
</feature>
<feature type="mutagenesis site" description="Reduced activity." evidence="4">
    <original>N</original>
    <variation>A</variation>
    <variation>S</variation>
    <location>
        <position position="154"/>
    </location>
</feature>
<feature type="sequence conflict" description="In Ref. 3; AA sequence." evidence="6" ref="3">
    <original>I</original>
    <variation>T</variation>
    <location>
        <position position="140"/>
    </location>
</feature>
<feature type="helix" evidence="15">
    <location>
        <begin position="23"/>
        <end position="36"/>
    </location>
</feature>
<feature type="helix" evidence="15">
    <location>
        <begin position="39"/>
        <end position="49"/>
    </location>
</feature>
<feature type="turn" evidence="15">
    <location>
        <begin position="54"/>
        <end position="57"/>
    </location>
</feature>
<feature type="helix" evidence="15">
    <location>
        <begin position="58"/>
        <end position="60"/>
    </location>
</feature>
<feature type="helix" evidence="15">
    <location>
        <begin position="63"/>
        <end position="67"/>
    </location>
</feature>
<feature type="turn" evidence="15">
    <location>
        <begin position="71"/>
        <end position="73"/>
    </location>
</feature>
<feature type="helix" evidence="15">
    <location>
        <begin position="74"/>
        <end position="80"/>
    </location>
</feature>
<feature type="turn" evidence="15">
    <location>
        <begin position="88"/>
        <end position="90"/>
    </location>
</feature>
<feature type="helix" evidence="15">
    <location>
        <begin position="96"/>
        <end position="99"/>
    </location>
</feature>
<feature type="helix" evidence="15">
    <location>
        <begin position="106"/>
        <end position="119"/>
    </location>
</feature>
<feature type="helix" evidence="15">
    <location>
        <begin position="126"/>
        <end position="140"/>
    </location>
</feature>
<feature type="helix" evidence="15">
    <location>
        <begin position="143"/>
        <end position="146"/>
    </location>
</feature>
<feature type="helix" evidence="15">
    <location>
        <begin position="149"/>
        <end position="152"/>
    </location>
</feature>
<feature type="turn" evidence="15">
    <location>
        <begin position="153"/>
        <end position="155"/>
    </location>
</feature>
<feature type="strand" evidence="15">
    <location>
        <begin position="157"/>
        <end position="160"/>
    </location>
</feature>
<feature type="strand" evidence="15">
    <location>
        <begin position="163"/>
        <end position="166"/>
    </location>
</feature>
<feature type="helix" evidence="15">
    <location>
        <begin position="167"/>
        <end position="172"/>
    </location>
</feature>
<feature type="helix" evidence="15">
    <location>
        <begin position="174"/>
        <end position="180"/>
    </location>
</feature>
<feature type="strand" evidence="15">
    <location>
        <begin position="182"/>
        <end position="184"/>
    </location>
</feature>
<feature type="helix" evidence="15">
    <location>
        <begin position="185"/>
        <end position="200"/>
    </location>
</feature>
<feature type="turn" evidence="15">
    <location>
        <begin position="203"/>
        <end position="207"/>
    </location>
</feature>
<feature type="helix" evidence="15">
    <location>
        <begin position="208"/>
        <end position="211"/>
    </location>
</feature>
<feature type="turn" evidence="15">
    <location>
        <begin position="212"/>
        <end position="214"/>
    </location>
</feature>
<feature type="helix" evidence="15">
    <location>
        <begin position="220"/>
        <end position="237"/>
    </location>
</feature>
<feature type="helix" evidence="15">
    <location>
        <begin position="244"/>
        <end position="249"/>
    </location>
</feature>
<feature type="turn" evidence="15">
    <location>
        <begin position="252"/>
        <end position="254"/>
    </location>
</feature>
<feature type="helix" evidence="15">
    <location>
        <begin position="255"/>
        <end position="283"/>
    </location>
</feature>
<organism>
    <name type="scientific">Aspergillus oryzae (strain ATCC 42149 / RIB 40)</name>
    <name type="common">Yellow koji mold</name>
    <dbReference type="NCBI Taxonomy" id="510516"/>
    <lineage>
        <taxon>Eukaryota</taxon>
        <taxon>Fungi</taxon>
        <taxon>Dikarya</taxon>
        <taxon>Ascomycota</taxon>
        <taxon>Pezizomycotina</taxon>
        <taxon>Eurotiomycetes</taxon>
        <taxon>Eurotiomycetidae</taxon>
        <taxon>Eurotiales</taxon>
        <taxon>Aspergillaceae</taxon>
        <taxon>Aspergillus</taxon>
        <taxon>Aspergillus subgen. Circumdati</taxon>
    </lineage>
</organism>
<protein>
    <recommendedName>
        <fullName evidence="5">Nuclease S1</fullName>
        <ecNumber evidence="4">3.1.30.1</ecNumber>
    </recommendedName>
    <alternativeName>
        <fullName evidence="5">Deoxyribonuclease S1</fullName>
    </alternativeName>
    <alternativeName>
        <fullName evidence="5">Endonuclease S1</fullName>
    </alternativeName>
    <alternativeName>
        <fullName evidence="5">Single-stranded-nucleate endonuclease</fullName>
    </alternativeName>
</protein>
<evidence type="ECO:0000250" key="1">
    <source>
        <dbReference type="UniProtKB" id="P24289"/>
    </source>
</evidence>
<evidence type="ECO:0000255" key="2">
    <source>
        <dbReference type="PROSITE-ProRule" id="PRU00498"/>
    </source>
</evidence>
<evidence type="ECO:0000269" key="3">
    <source>
    </source>
</evidence>
<evidence type="ECO:0000269" key="4">
    <source>
    </source>
</evidence>
<evidence type="ECO:0000303" key="5">
    <source>
    </source>
</evidence>
<evidence type="ECO:0000305" key="6"/>
<evidence type="ECO:0000312" key="7">
    <source>
        <dbReference type="EMBL" id="BAE56634.1"/>
    </source>
</evidence>
<evidence type="ECO:0007744" key="8">
    <source>
        <dbReference type="PDB" id="5FB9"/>
    </source>
</evidence>
<evidence type="ECO:0007744" key="9">
    <source>
        <dbReference type="PDB" id="5FBA"/>
    </source>
</evidence>
<evidence type="ECO:0007744" key="10">
    <source>
        <dbReference type="PDB" id="5FBB"/>
    </source>
</evidence>
<evidence type="ECO:0007744" key="11">
    <source>
        <dbReference type="PDB" id="5FBC"/>
    </source>
</evidence>
<evidence type="ECO:0007744" key="12">
    <source>
        <dbReference type="PDB" id="5FBD"/>
    </source>
</evidence>
<evidence type="ECO:0007744" key="13">
    <source>
        <dbReference type="PDB" id="5FBF"/>
    </source>
</evidence>
<evidence type="ECO:0007744" key="14">
    <source>
        <dbReference type="PDB" id="5FBG"/>
    </source>
</evidence>
<evidence type="ECO:0007829" key="15">
    <source>
        <dbReference type="PDB" id="5FBF"/>
    </source>
</evidence>
<sequence length="287" mass="31146">MPRLLPISAATLALAQLTYGWGNLGHETVAYIAQSFVASSTESFCQNILGDDSTSYLANVATWADTYKYTDAGEFSKPYHFIDAQDNPPQSCGVDYDRDCGSAGCSISAIQNYTNILLESPNGSEALNALKFVVHIIGDIHQPLHDENLEAGGNGIDVTYDGETTNLHHIWDTNMPEEAAGGYSLSVAKTYADLLTERIKTGTYSSKKDSWTDGIDIKDPVSTSMIWAADANTYVCSTVLDDGLAYINSTDLSGEYYDKSQPVFEELIAKAGYRLAAWLDLIASQPS</sequence>